<keyword id="KW-1003">Cell membrane</keyword>
<keyword id="KW-0868">Chloride</keyword>
<keyword id="KW-0869">Chloride channel</keyword>
<keyword id="KW-0968">Cytoplasmic vesicle</keyword>
<keyword id="KW-1015">Disulfide bond</keyword>
<keyword id="KW-0325">Glycoprotein</keyword>
<keyword id="KW-0407">Ion channel</keyword>
<keyword id="KW-0406">Ion transport</keyword>
<keyword id="KW-1071">Ligand-gated ion channel</keyword>
<keyword id="KW-0472">Membrane</keyword>
<keyword id="KW-0597">Phosphoprotein</keyword>
<keyword id="KW-0628">Postsynaptic cell membrane</keyword>
<keyword id="KW-0675">Receptor</keyword>
<keyword id="KW-1185">Reference proteome</keyword>
<keyword id="KW-0732">Signal</keyword>
<keyword id="KW-0770">Synapse</keyword>
<keyword id="KW-0812">Transmembrane</keyword>
<keyword id="KW-1133">Transmembrane helix</keyword>
<keyword id="KW-0813">Transport</keyword>
<proteinExistence type="evidence at transcript level"/>
<evidence type="ECO:0000250" key="1">
    <source>
        <dbReference type="UniProtKB" id="P08219"/>
    </source>
</evidence>
<evidence type="ECO:0000250" key="2">
    <source>
        <dbReference type="UniProtKB" id="P0C2W5"/>
    </source>
</evidence>
<evidence type="ECO:0000250" key="3">
    <source>
        <dbReference type="UniProtKB" id="P15431"/>
    </source>
</evidence>
<evidence type="ECO:0000250" key="4">
    <source>
        <dbReference type="UniProtKB" id="P28472"/>
    </source>
</evidence>
<evidence type="ECO:0000250" key="5">
    <source>
        <dbReference type="UniProtKB" id="P47870"/>
    </source>
</evidence>
<evidence type="ECO:0000250" key="6">
    <source>
        <dbReference type="UniProtKB" id="P63137"/>
    </source>
</evidence>
<evidence type="ECO:0000250" key="7">
    <source>
        <dbReference type="UniProtKB" id="P63138"/>
    </source>
</evidence>
<evidence type="ECO:0000255" key="8"/>
<evidence type="ECO:0000305" key="9"/>
<evidence type="ECO:0000312" key="10">
    <source>
        <dbReference type="EMBL" id="ACY69096.1"/>
    </source>
</evidence>
<protein>
    <recommendedName>
        <fullName evidence="5">Gamma-aminobutyric acid receptor subunit beta-2</fullName>
    </recommendedName>
    <alternativeName>
        <fullName>GABA(A) receptor subunit beta-2</fullName>
        <shortName evidence="5">GABAAR subunit beta-2</shortName>
    </alternativeName>
</protein>
<gene>
    <name evidence="10" type="primary">GABRB2</name>
</gene>
<reference evidence="10" key="1">
    <citation type="journal article" date="2009" name="PLoS ONE">
        <title>Alternative-splicing in the exon-10 region of GABA(A) receptor beta(2) subunit gene: relationships between novel isoforms and psychotic disorders.</title>
        <authorList>
            <person name="Zhao C."/>
            <person name="Xu Z."/>
            <person name="Wang F."/>
            <person name="Chen J."/>
            <person name="Ng S.K."/>
            <person name="Wong P.W."/>
            <person name="Yu Z."/>
            <person name="Pun F.W."/>
            <person name="Ren L."/>
            <person name="Lo W.S."/>
            <person name="Tsang S.Y."/>
            <person name="Xue H."/>
        </authorList>
    </citation>
    <scope>NUCLEOTIDE SEQUENCE [MRNA]</scope>
</reference>
<sequence>MWRVRKRGYFGIWSFPLIIAAVCAQSVNDPSNMSLVKETVDRLLKGYDIRLRPDFGGPPVAVGMNIDIASIDMVSEVNMDYTLTMYFQQAWRDKRLSYNVIPLNLTLDNRVADQLWVPDTYFLNDKKSFVHGVTVKNRMIRLHPDGTVLYGLRITTTAACMMDLRRYPLDEQNCTLEIESYGYTTDDIEFYWRGDDNAVTGVTKIELPQFSIVDYKLITKKVVFSTGSYPRLSLSFKLKRNIGYFILQTYMPSILITILSWVSFWINYDASAARVALGITTVLTMTTINTHLRETLPKIPYVKAIDMYLMGCFVFVFMALLEYALVNYIFFGRGPQRQKKAAEKAASANNEKMRLDVNKIFYKDIKQNGTQYRSLWDPTGNLSPTRRTTNYDFSLYTMDPHENILLSTLEIKNEMATSEAVMGLGDPRSTMLAYDASSIQYRKAGLPRHSFGRNALERHVAQKKSRLRRRASQLKITIPDLTDVNAIDRWSRIFFPVVFSFFNIVYWLYYVN</sequence>
<organism>
    <name type="scientific">Macaca mulatta</name>
    <name type="common">Rhesus macaque</name>
    <dbReference type="NCBI Taxonomy" id="9544"/>
    <lineage>
        <taxon>Eukaryota</taxon>
        <taxon>Metazoa</taxon>
        <taxon>Chordata</taxon>
        <taxon>Craniata</taxon>
        <taxon>Vertebrata</taxon>
        <taxon>Euteleostomi</taxon>
        <taxon>Mammalia</taxon>
        <taxon>Eutheria</taxon>
        <taxon>Euarchontoglires</taxon>
        <taxon>Primates</taxon>
        <taxon>Haplorrhini</taxon>
        <taxon>Catarrhini</taxon>
        <taxon>Cercopithecidae</taxon>
        <taxon>Cercopithecinae</taxon>
        <taxon>Macaca</taxon>
    </lineage>
</organism>
<comment type="function">
    <text evidence="1 5 7">Beta subunit of the heteropentameric ligand-gated chloride channel gated by gamma-aminobutyric acid (GABA), a major inhibitory neurotransmitter in the brain. GABA-gated chloride channels, also named GABA(A) receptors (GABAAR), consist of five subunits arranged around a central pore and contain GABA active binding site(s) located at the alpha and beta subunit interface(s) (By similarity). When activated by GABA, GABAARs selectively allow the flow of chloride anions across the cell membrane down their electrochemical gradient (By similarity). Chloride influx into the postsynaptic neuron following GABAAR opening decreases the neuron ability to generate a new action potential, thereby reducing nerve transmission (By similarity). GABAARs containing alpha-1 and beta-2 or -3 subunits exhibit synaptogenic activity; the gamma-2 subunit being necessary but not sufficient to induce rapid synaptic contacts formation (By similarity). Extrasynaptic beta-2 receptors contribute to the tonic GABAergic inhibition (By similarity). Beta-containing GABAARs can simultaneously bind GABA and histamine where histamine binds at the interface of two neighboring beta subunits, which may be involved in the regulation of sleep and wakefulness (By similarity).</text>
</comment>
<comment type="catalytic activity">
    <reaction evidence="1">
        <text>chloride(in) = chloride(out)</text>
        <dbReference type="Rhea" id="RHEA:29823"/>
        <dbReference type="ChEBI" id="CHEBI:17996"/>
    </reaction>
</comment>
<comment type="activity regulation">
    <text evidence="2 5 7">Allosterically activated by benzodiazepines and the anesthetic etomidate (By similarity). Inhibited by the antagonist bicuculline (By similarity). Potentiated by histamine (By similarity).</text>
</comment>
<comment type="subunit">
    <text evidence="7">Heteropentamer, formed by a combination of alpha (GABRA1-6), beta (GABRB1-3), gamma (GABRG1-3), delta (GABRD), epsilon (GABRE), rho (GABRR1-3), pi (GABRP) and theta (GABRQ) chains, each subunit exhibiting distinct physiological and pharmacological properties (By similarity). Interacts with UBQLN1 (By similarity). May interact with KIF21B (By similarity). Identified in a complex of 720 kDa composed of LHFPL4, NLGN2, GABRA1, GABRB2, GABRG2 and GABRB3 (By similarity).</text>
</comment>
<comment type="subcellular location">
    <subcellularLocation>
        <location evidence="7">Postsynaptic cell membrane</location>
        <topology evidence="5">Multi-pass membrane protein</topology>
    </subcellularLocation>
    <subcellularLocation>
        <location evidence="5">Cell membrane</location>
        <topology evidence="5">Multi-pass membrane protein</topology>
    </subcellularLocation>
    <subcellularLocation>
        <location evidence="7">Cytoplasmic vesicle membrane</location>
    </subcellularLocation>
</comment>
<comment type="domain">
    <text evidence="6">The extracellular domain contributes to synaptic contact formation.</text>
</comment>
<comment type="domain">
    <text evidence="5">GABAARs subunits share a common topological structure: a peptide sequence made up of a long extracellular N-terminal, four transmembrane domains, intracellular or cytoplasmic domain located between the third and the fourth transmembrane domains.</text>
</comment>
<comment type="PTM">
    <text evidence="6">Glycosylated.</text>
</comment>
<comment type="similarity">
    <text evidence="9">Belongs to the ligand-gated ion channel (TC 1.A.9) family. Gamma-aminobutyric acid receptor (TC 1.A.9.5) subfamily. GABRB2 sub-subfamily.</text>
</comment>
<dbReference type="EMBL" id="GU086165">
    <property type="protein sequence ID" value="ACY69096.1"/>
    <property type="molecule type" value="mRNA"/>
</dbReference>
<dbReference type="RefSeq" id="NP_001161800.1">
    <property type="nucleotide sequence ID" value="NM_001168328.1"/>
</dbReference>
<dbReference type="RefSeq" id="XP_014996834.1">
    <property type="nucleotide sequence ID" value="XM_015141348.2"/>
</dbReference>
<dbReference type="RefSeq" id="XP_014996836.1">
    <property type="nucleotide sequence ID" value="XM_015141350.2"/>
</dbReference>
<dbReference type="SMR" id="D1LYT2"/>
<dbReference type="FunCoup" id="D1LYT2">
    <property type="interactions" value="718"/>
</dbReference>
<dbReference type="STRING" id="9544.ENSMMUP00000023715"/>
<dbReference type="GlyCosmos" id="D1LYT2">
    <property type="glycosylation" value="3 sites, No reported glycans"/>
</dbReference>
<dbReference type="PaxDb" id="9544-ENSMMUP00000023715"/>
<dbReference type="Ensembl" id="ENSMMUT00000025349.4">
    <property type="protein sequence ID" value="ENSMMUP00000023715.3"/>
    <property type="gene ID" value="ENSMMUG00000018044.4"/>
</dbReference>
<dbReference type="GeneID" id="696767"/>
<dbReference type="KEGG" id="mcc:696767"/>
<dbReference type="CTD" id="2561"/>
<dbReference type="VEuPathDB" id="HostDB:ENSMMUG00000018044"/>
<dbReference type="VGNC" id="VGNC:72852">
    <property type="gene designation" value="GABRB2"/>
</dbReference>
<dbReference type="eggNOG" id="KOG3643">
    <property type="taxonomic scope" value="Eukaryota"/>
</dbReference>
<dbReference type="GeneTree" id="ENSGT00940000154245"/>
<dbReference type="InParanoid" id="D1LYT2"/>
<dbReference type="OMA" id="INKMDPH"/>
<dbReference type="OrthoDB" id="8890589at2759"/>
<dbReference type="Proteomes" id="UP000006718">
    <property type="component" value="Chromosome 6"/>
</dbReference>
<dbReference type="Bgee" id="ENSMMUG00000018044">
    <property type="expression patterns" value="Expressed in dorsolateral prefrontal cortex and 14 other cell types or tissues"/>
</dbReference>
<dbReference type="ExpressionAtlas" id="D1LYT2">
    <property type="expression patterns" value="baseline"/>
</dbReference>
<dbReference type="GO" id="GO:0034707">
    <property type="term" value="C:chloride channel complex"/>
    <property type="evidence" value="ECO:0007669"/>
    <property type="project" value="UniProtKB-KW"/>
</dbReference>
<dbReference type="GO" id="GO:0030659">
    <property type="term" value="C:cytoplasmic vesicle membrane"/>
    <property type="evidence" value="ECO:0007669"/>
    <property type="project" value="UniProtKB-SubCell"/>
</dbReference>
<dbReference type="GO" id="GO:0043197">
    <property type="term" value="C:dendritic spine"/>
    <property type="evidence" value="ECO:0007669"/>
    <property type="project" value="Ensembl"/>
</dbReference>
<dbReference type="GO" id="GO:1902711">
    <property type="term" value="C:GABA-A receptor complex"/>
    <property type="evidence" value="ECO:0000250"/>
    <property type="project" value="UniProtKB"/>
</dbReference>
<dbReference type="GO" id="GO:0098982">
    <property type="term" value="C:GABA-ergic synapse"/>
    <property type="evidence" value="ECO:0007669"/>
    <property type="project" value="Ensembl"/>
</dbReference>
<dbReference type="GO" id="GO:0005886">
    <property type="term" value="C:plasma membrane"/>
    <property type="evidence" value="ECO:0000250"/>
    <property type="project" value="UniProtKB"/>
</dbReference>
<dbReference type="GO" id="GO:0099634">
    <property type="term" value="C:postsynaptic specialization membrane"/>
    <property type="evidence" value="ECO:0000250"/>
    <property type="project" value="UniProtKB"/>
</dbReference>
<dbReference type="GO" id="GO:0005254">
    <property type="term" value="F:chloride channel activity"/>
    <property type="evidence" value="ECO:0000250"/>
    <property type="project" value="UniProtKB"/>
</dbReference>
<dbReference type="GO" id="GO:0004890">
    <property type="term" value="F:GABA-A receptor activity"/>
    <property type="evidence" value="ECO:0000250"/>
    <property type="project" value="UniProtKB"/>
</dbReference>
<dbReference type="GO" id="GO:0022851">
    <property type="term" value="F:GABA-gated chloride ion channel activity"/>
    <property type="evidence" value="ECO:0007669"/>
    <property type="project" value="Ensembl"/>
</dbReference>
<dbReference type="GO" id="GO:1904315">
    <property type="term" value="F:transmitter-gated monoatomic ion channel activity involved in regulation of postsynaptic membrane potential"/>
    <property type="evidence" value="ECO:0007669"/>
    <property type="project" value="Ensembl"/>
</dbReference>
<dbReference type="GO" id="GO:0071420">
    <property type="term" value="P:cellular response to histamine"/>
    <property type="evidence" value="ECO:0000250"/>
    <property type="project" value="UniProtKB"/>
</dbReference>
<dbReference type="GO" id="GO:1902476">
    <property type="term" value="P:chloride transmembrane transport"/>
    <property type="evidence" value="ECO:0000250"/>
    <property type="project" value="UniProtKB"/>
</dbReference>
<dbReference type="GO" id="GO:0090102">
    <property type="term" value="P:cochlea development"/>
    <property type="evidence" value="ECO:0007669"/>
    <property type="project" value="Ensembl"/>
</dbReference>
<dbReference type="GO" id="GO:0007214">
    <property type="term" value="P:gamma-aminobutyric acid signaling pathway"/>
    <property type="evidence" value="ECO:0007669"/>
    <property type="project" value="Ensembl"/>
</dbReference>
<dbReference type="GO" id="GO:1904862">
    <property type="term" value="P:inhibitory synapse assembly"/>
    <property type="evidence" value="ECO:0000250"/>
    <property type="project" value="UniProtKB"/>
</dbReference>
<dbReference type="GO" id="GO:0060119">
    <property type="term" value="P:inner ear receptor cell development"/>
    <property type="evidence" value="ECO:0007669"/>
    <property type="project" value="Ensembl"/>
</dbReference>
<dbReference type="GO" id="GO:0060384">
    <property type="term" value="P:innervation"/>
    <property type="evidence" value="ECO:0007669"/>
    <property type="project" value="Ensembl"/>
</dbReference>
<dbReference type="CDD" id="cd18999">
    <property type="entry name" value="LGIC_ECD_GABAAR_B"/>
    <property type="match status" value="1"/>
</dbReference>
<dbReference type="FunFam" id="1.20.58.390:FF:000097">
    <property type="entry name" value="Gamma-aminobutyric acid (GABA) A receptor, beta 2"/>
    <property type="match status" value="1"/>
</dbReference>
<dbReference type="FunFam" id="2.70.170.10:FF:000004">
    <property type="entry name" value="Gamma-aminobutyric acid receptor subunit beta-2 isoform A"/>
    <property type="match status" value="1"/>
</dbReference>
<dbReference type="Gene3D" id="2.70.170.10">
    <property type="entry name" value="Neurotransmitter-gated ion-channel ligand-binding domain"/>
    <property type="match status" value="1"/>
</dbReference>
<dbReference type="Gene3D" id="1.20.58.390">
    <property type="entry name" value="Neurotransmitter-gated ion-channel transmembrane domain"/>
    <property type="match status" value="1"/>
</dbReference>
<dbReference type="InterPro" id="IPR006028">
    <property type="entry name" value="GABAA/Glycine_rcpt"/>
</dbReference>
<dbReference type="InterPro" id="IPR002289">
    <property type="entry name" value="GABAAb_rcpt"/>
</dbReference>
<dbReference type="InterPro" id="IPR006202">
    <property type="entry name" value="Neur_chan_lig-bd"/>
</dbReference>
<dbReference type="InterPro" id="IPR036734">
    <property type="entry name" value="Neur_chan_lig-bd_sf"/>
</dbReference>
<dbReference type="InterPro" id="IPR006201">
    <property type="entry name" value="Neur_channel"/>
</dbReference>
<dbReference type="InterPro" id="IPR036719">
    <property type="entry name" value="Neuro-gated_channel_TM_sf"/>
</dbReference>
<dbReference type="InterPro" id="IPR038050">
    <property type="entry name" value="Neuro_actylchol_rec"/>
</dbReference>
<dbReference type="InterPro" id="IPR006029">
    <property type="entry name" value="Neurotrans-gated_channel_TM"/>
</dbReference>
<dbReference type="InterPro" id="IPR018000">
    <property type="entry name" value="Neurotransmitter_ion_chnl_CS"/>
</dbReference>
<dbReference type="NCBIfam" id="TIGR00860">
    <property type="entry name" value="LIC"/>
    <property type="match status" value="1"/>
</dbReference>
<dbReference type="PANTHER" id="PTHR18945">
    <property type="entry name" value="NEUROTRANSMITTER GATED ION CHANNEL"/>
    <property type="match status" value="1"/>
</dbReference>
<dbReference type="Pfam" id="PF02931">
    <property type="entry name" value="Neur_chan_LBD"/>
    <property type="match status" value="1"/>
</dbReference>
<dbReference type="Pfam" id="PF02932">
    <property type="entry name" value="Neur_chan_memb"/>
    <property type="match status" value="1"/>
</dbReference>
<dbReference type="PRINTS" id="PR01160">
    <property type="entry name" value="GABAARBETA"/>
</dbReference>
<dbReference type="PRINTS" id="PR00253">
    <property type="entry name" value="GABAARECEPTR"/>
</dbReference>
<dbReference type="PRINTS" id="PR00252">
    <property type="entry name" value="NRIONCHANNEL"/>
</dbReference>
<dbReference type="SUPFAM" id="SSF90112">
    <property type="entry name" value="Neurotransmitter-gated ion-channel transmembrane pore"/>
    <property type="match status" value="1"/>
</dbReference>
<dbReference type="SUPFAM" id="SSF63712">
    <property type="entry name" value="Nicotinic receptor ligand binding domain-like"/>
    <property type="match status" value="1"/>
</dbReference>
<dbReference type="PROSITE" id="PS00236">
    <property type="entry name" value="NEUROTR_ION_CHANNEL"/>
    <property type="match status" value="1"/>
</dbReference>
<feature type="signal peptide" evidence="2">
    <location>
        <begin position="1"/>
        <end position="25"/>
    </location>
</feature>
<feature type="chain" id="PRO_0000392919" description="Gamma-aminobutyric acid receptor subunit beta-2" evidence="2">
    <location>
        <begin position="26"/>
        <end position="512"/>
    </location>
</feature>
<feature type="topological domain" description="Extracellular" evidence="8 9">
    <location>
        <begin position="26"/>
        <end position="244"/>
    </location>
</feature>
<feature type="transmembrane region" description="Helical" evidence="9">
    <location>
        <begin position="245"/>
        <end position="266"/>
    </location>
</feature>
<feature type="transmembrane region" description="Helical" evidence="9">
    <location>
        <begin position="270"/>
        <end position="292"/>
    </location>
</feature>
<feature type="transmembrane region" description="Helical" evidence="9">
    <location>
        <begin position="304"/>
        <end position="326"/>
    </location>
</feature>
<feature type="topological domain" description="Cytoplasmic" evidence="8 9">
    <location>
        <begin position="327"/>
        <end position="489"/>
    </location>
</feature>
<feature type="transmembrane region" description="Helical" evidence="9">
    <location>
        <begin position="490"/>
        <end position="511"/>
    </location>
</feature>
<feature type="binding site" description="in chain B" evidence="4">
    <location>
        <position position="121"/>
    </location>
    <ligand>
        <name>histamine</name>
        <dbReference type="ChEBI" id="CHEBI:58432"/>
        <note>ligand shared between two neighboring beta subunits</note>
    </ligand>
</feature>
<feature type="binding site" description="in chain B" evidence="4">
    <location>
        <begin position="180"/>
        <end position="181"/>
    </location>
    <ligand>
        <name>histamine</name>
        <dbReference type="ChEBI" id="CHEBI:58432"/>
        <note>ligand shared between two neighboring beta subunits</note>
    </ligand>
</feature>
<feature type="binding site" evidence="3">
    <location>
        <position position="181"/>
    </location>
    <ligand>
        <name>4-aminobutanoate</name>
        <dbReference type="ChEBI" id="CHEBI:59888"/>
        <note>ligand shared with the neighboring alpha subunit</note>
    </ligand>
</feature>
<feature type="binding site" evidence="5">
    <location>
        <position position="226"/>
    </location>
    <ligand>
        <name>4-aminobutanoate</name>
        <dbReference type="ChEBI" id="CHEBI:59888"/>
        <note>ligand shared with the neighboring alpha subunit</note>
    </ligand>
</feature>
<feature type="binding site" description="in chain B" evidence="4">
    <location>
        <position position="226"/>
    </location>
    <ligand>
        <name>histamine</name>
        <dbReference type="ChEBI" id="CHEBI:58432"/>
        <note>ligand shared between two neighboring beta subunits</note>
    </ligand>
</feature>
<feature type="modified residue" description="Phosphotyrosine" evidence="6">
    <location>
        <position position="441"/>
    </location>
</feature>
<feature type="glycosylation site" description="N-linked (GlcNAc...) asparagine" evidence="8">
    <location>
        <position position="32"/>
    </location>
</feature>
<feature type="glycosylation site" description="N-linked (GlcNAc...) asparagine" evidence="8">
    <location>
        <position position="104"/>
    </location>
</feature>
<feature type="glycosylation site" description="N-linked (GlcNAc...) asparagine" evidence="8">
    <location>
        <position position="173"/>
    </location>
</feature>
<feature type="disulfide bond" evidence="5">
    <location>
        <begin position="160"/>
        <end position="174"/>
    </location>
</feature>
<name>GBRB2_MACMU</name>
<accession>D1LYT2</accession>